<proteinExistence type="evidence at protein level"/>
<reference key="1">
    <citation type="journal article" date="2004" name="J. Biol. Chem.">
        <title>Intermedin is a calcitonin/calcitonin gene-related peptide family peptide acting through the calcitonin receptor-like receptor/receptor activity-modifying protein receptor complexes.</title>
        <authorList>
            <person name="Roh J."/>
            <person name="Chang C.L."/>
            <person name="Bhalla A."/>
            <person name="Klein C."/>
            <person name="Hsu S.Y.T."/>
        </authorList>
    </citation>
    <scope>NUCLEOTIDE SEQUENCE [MRNA]</scope>
    <scope>FUNCTION</scope>
    <scope>TISSUE SPECIFICITY</scope>
    <scope>SUBCELLULAR LOCATION</scope>
</reference>
<reference key="2">
    <citation type="journal article" date="2004" name="FEBS Lett.">
        <title>Identification of novel adrenomedullin in mammals: a potent cardiovascular and renal regulator.</title>
        <authorList>
            <person name="Takei Y."/>
            <person name="Inoue K."/>
            <person name="Ogoshi M."/>
            <person name="Kawahara T."/>
            <person name="Bannai H."/>
            <person name="Miyano S."/>
        </authorList>
    </citation>
    <scope>NUCLEOTIDE SEQUENCE [MRNA]</scope>
    <source>
        <tissue>Kidney</tissue>
    </source>
</reference>
<reference key="3">
    <citation type="journal article" date="2006" name="Peptides">
        <title>Immunocytochemical localization of adrenomedullin 2/intermedin-like immunoreactivity in human hypothalamus, heart and kidney.</title>
        <authorList>
            <person name="Takahashi K."/>
            <person name="Kikuchi K."/>
            <person name="Maruyama Y."/>
            <person name="Urabe T."/>
            <person name="Nakajima K."/>
            <person name="Sasano H."/>
            <person name="Imai Y."/>
            <person name="Murakami O."/>
            <person name="Totsune K."/>
        </authorList>
    </citation>
    <scope>NUCLEOTIDE SEQUENCE [MRNA]</scope>
    <scope>TISSUE SPECIFICITY</scope>
    <source>
        <tissue>Brain</tissue>
    </source>
</reference>
<reference key="4">
    <citation type="journal article" date="1999" name="Nature">
        <title>The DNA sequence of human chromosome 22.</title>
        <authorList>
            <person name="Dunham I."/>
            <person name="Hunt A.R."/>
            <person name="Collins J.E."/>
            <person name="Bruskiewich R."/>
            <person name="Beare D.M."/>
            <person name="Clamp M."/>
            <person name="Smink L.J."/>
            <person name="Ainscough R."/>
            <person name="Almeida J.P."/>
            <person name="Babbage A.K."/>
            <person name="Bagguley C."/>
            <person name="Bailey J."/>
            <person name="Barlow K.F."/>
            <person name="Bates K.N."/>
            <person name="Beasley O.P."/>
            <person name="Bird C.P."/>
            <person name="Blakey S.E."/>
            <person name="Bridgeman A.M."/>
            <person name="Buck D."/>
            <person name="Burgess J."/>
            <person name="Burrill W.D."/>
            <person name="Burton J."/>
            <person name="Carder C."/>
            <person name="Carter N.P."/>
            <person name="Chen Y."/>
            <person name="Clark G."/>
            <person name="Clegg S.M."/>
            <person name="Cobley V.E."/>
            <person name="Cole C.G."/>
            <person name="Collier R.E."/>
            <person name="Connor R."/>
            <person name="Conroy D."/>
            <person name="Corby N.R."/>
            <person name="Coville G.J."/>
            <person name="Cox A.V."/>
            <person name="Davis J."/>
            <person name="Dawson E."/>
            <person name="Dhami P.D."/>
            <person name="Dockree C."/>
            <person name="Dodsworth S.J."/>
            <person name="Durbin R.M."/>
            <person name="Ellington A.G."/>
            <person name="Evans K.L."/>
            <person name="Fey J.M."/>
            <person name="Fleming K."/>
            <person name="French L."/>
            <person name="Garner A.A."/>
            <person name="Gilbert J.G.R."/>
            <person name="Goward M.E."/>
            <person name="Grafham D.V."/>
            <person name="Griffiths M.N.D."/>
            <person name="Hall C."/>
            <person name="Hall R.E."/>
            <person name="Hall-Tamlyn G."/>
            <person name="Heathcott R.W."/>
            <person name="Ho S."/>
            <person name="Holmes S."/>
            <person name="Hunt S.E."/>
            <person name="Jones M.C."/>
            <person name="Kershaw J."/>
            <person name="Kimberley A.M."/>
            <person name="King A."/>
            <person name="Laird G.K."/>
            <person name="Langford C.F."/>
            <person name="Leversha M.A."/>
            <person name="Lloyd C."/>
            <person name="Lloyd D.M."/>
            <person name="Martyn I.D."/>
            <person name="Mashreghi-Mohammadi M."/>
            <person name="Matthews L.H."/>
            <person name="Mccann O.T."/>
            <person name="Mcclay J."/>
            <person name="Mclaren S."/>
            <person name="McMurray A.A."/>
            <person name="Milne S.A."/>
            <person name="Mortimore B.J."/>
            <person name="Odell C.N."/>
            <person name="Pavitt R."/>
            <person name="Pearce A.V."/>
            <person name="Pearson D."/>
            <person name="Phillimore B.J.C.T."/>
            <person name="Phillips S.H."/>
            <person name="Plumb R.W."/>
            <person name="Ramsay H."/>
            <person name="Ramsey Y."/>
            <person name="Rogers L."/>
            <person name="Ross M.T."/>
            <person name="Scott C.E."/>
            <person name="Sehra H.K."/>
            <person name="Skuce C.D."/>
            <person name="Smalley S."/>
            <person name="Smith M.L."/>
            <person name="Soderlund C."/>
            <person name="Spragon L."/>
            <person name="Steward C.A."/>
            <person name="Sulston J.E."/>
            <person name="Swann R.M."/>
            <person name="Vaudin M."/>
            <person name="Wall M."/>
            <person name="Wallis J.M."/>
            <person name="Whiteley M.N."/>
            <person name="Willey D.L."/>
            <person name="Williams L."/>
            <person name="Williams S.A."/>
            <person name="Williamson H."/>
            <person name="Wilmer T.E."/>
            <person name="Wilming L."/>
            <person name="Wright C.L."/>
            <person name="Hubbard T."/>
            <person name="Bentley D.R."/>
            <person name="Beck S."/>
            <person name="Rogers J."/>
            <person name="Shimizu N."/>
            <person name="Minoshima S."/>
            <person name="Kawasaki K."/>
            <person name="Sasaki T."/>
            <person name="Asakawa S."/>
            <person name="Kudoh J."/>
            <person name="Shintani A."/>
            <person name="Shibuya K."/>
            <person name="Yoshizaki Y."/>
            <person name="Aoki N."/>
            <person name="Mitsuyama S."/>
            <person name="Roe B.A."/>
            <person name="Chen F."/>
            <person name="Chu L."/>
            <person name="Crabtree J."/>
            <person name="Deschamps S."/>
            <person name="Do A."/>
            <person name="Do T."/>
            <person name="Dorman A."/>
            <person name="Fang F."/>
            <person name="Fu Y."/>
            <person name="Hu P."/>
            <person name="Hua A."/>
            <person name="Kenton S."/>
            <person name="Lai H."/>
            <person name="Lao H.I."/>
            <person name="Lewis J."/>
            <person name="Lewis S."/>
            <person name="Lin S.-P."/>
            <person name="Loh P."/>
            <person name="Malaj E."/>
            <person name="Nguyen T."/>
            <person name="Pan H."/>
            <person name="Phan S."/>
            <person name="Qi S."/>
            <person name="Qian Y."/>
            <person name="Ray L."/>
            <person name="Ren Q."/>
            <person name="Shaull S."/>
            <person name="Sloan D."/>
            <person name="Song L."/>
            <person name="Wang Q."/>
            <person name="Wang Y."/>
            <person name="Wang Z."/>
            <person name="White J."/>
            <person name="Willingham D."/>
            <person name="Wu H."/>
            <person name="Yao Z."/>
            <person name="Zhan M."/>
            <person name="Zhang G."/>
            <person name="Chissoe S."/>
            <person name="Murray J."/>
            <person name="Miller N."/>
            <person name="Minx P."/>
            <person name="Fulton R."/>
            <person name="Johnson D."/>
            <person name="Bemis G."/>
            <person name="Bentley D."/>
            <person name="Bradshaw H."/>
            <person name="Bourne S."/>
            <person name="Cordes M."/>
            <person name="Du Z."/>
            <person name="Fulton L."/>
            <person name="Goela D."/>
            <person name="Graves T."/>
            <person name="Hawkins J."/>
            <person name="Hinds K."/>
            <person name="Kemp K."/>
            <person name="Latreille P."/>
            <person name="Layman D."/>
            <person name="Ozersky P."/>
            <person name="Rohlfing T."/>
            <person name="Scheet P."/>
            <person name="Walker C."/>
            <person name="Wamsley A."/>
            <person name="Wohldmann P."/>
            <person name="Pepin K."/>
            <person name="Nelson J."/>
            <person name="Korf I."/>
            <person name="Bedell J.A."/>
            <person name="Hillier L.W."/>
            <person name="Mardis E."/>
            <person name="Waterston R."/>
            <person name="Wilson R."/>
            <person name="Emanuel B.S."/>
            <person name="Shaikh T."/>
            <person name="Kurahashi H."/>
            <person name="Saitta S."/>
            <person name="Budarf M.L."/>
            <person name="McDermid H.E."/>
            <person name="Johnson A."/>
            <person name="Wong A.C.C."/>
            <person name="Morrow B.E."/>
            <person name="Edelmann L."/>
            <person name="Kim U.J."/>
            <person name="Shizuya H."/>
            <person name="Simon M.I."/>
            <person name="Dumanski J.P."/>
            <person name="Peyrard M."/>
            <person name="Kedra D."/>
            <person name="Seroussi E."/>
            <person name="Fransson I."/>
            <person name="Tapia I."/>
            <person name="Bruder C.E."/>
            <person name="O'Brien K.P."/>
            <person name="Wilkinson P."/>
            <person name="Bodenteich A."/>
            <person name="Hartman K."/>
            <person name="Hu X."/>
            <person name="Khan A.S."/>
            <person name="Lane L."/>
            <person name="Tilahun Y."/>
            <person name="Wright H."/>
        </authorList>
    </citation>
    <scope>NUCLEOTIDE SEQUENCE [LARGE SCALE GENOMIC DNA]</scope>
</reference>
<reference evidence="14" key="5">
    <citation type="journal article" date="2020" name="ACS Pharmacol. Transl. Sci.">
        <title>Structure and Dynamics of Adrenomedullin Receptors AM1 and AM2 Reveal Key Mechanisms in the Control of Receptor Phenotype by Receptor Activity-Modifying Proteins.</title>
        <authorList>
            <person name="Liang Y.L."/>
            <person name="Belousoff M.J."/>
            <person name="Fletcher M.M."/>
            <person name="Zhang X."/>
            <person name="Khoshouei M."/>
            <person name="Deganutti G."/>
            <person name="Koole C."/>
            <person name="Furness S.G.B."/>
            <person name="Miller L.J."/>
            <person name="Hay D.L."/>
            <person name="Christopoulos A."/>
            <person name="Reynolds C.A."/>
            <person name="Danev R."/>
            <person name="Wootten D."/>
            <person name="Sexton P.M."/>
        </authorList>
    </citation>
    <scope>STRUCTURE BY ELECTRON MICROSCOPY (2.30 ANGSTROMS) OF 101-147 IN COMPLEX WITH CALCRL; RAMP3 AND G PROTEINS</scope>
    <scope>FUNCTION</scope>
</reference>
<evidence type="ECO:0000250" key="1"/>
<evidence type="ECO:0000250" key="2">
    <source>
        <dbReference type="UniProtKB" id="P35318"/>
    </source>
</evidence>
<evidence type="ECO:0000250" key="3">
    <source>
        <dbReference type="UniProtKB" id="P61312"/>
    </source>
</evidence>
<evidence type="ECO:0000255" key="4"/>
<evidence type="ECO:0000256" key="5">
    <source>
        <dbReference type="SAM" id="MobiDB-lite"/>
    </source>
</evidence>
<evidence type="ECO:0000269" key="6">
    <source>
    </source>
</evidence>
<evidence type="ECO:0000269" key="7">
    <source>
    </source>
</evidence>
<evidence type="ECO:0000269" key="8">
    <source>
    </source>
</evidence>
<evidence type="ECO:0000303" key="9">
    <source>
    </source>
</evidence>
<evidence type="ECO:0000303" key="10">
    <source>
    </source>
</evidence>
<evidence type="ECO:0000305" key="11"/>
<evidence type="ECO:0000305" key="12">
    <source>
    </source>
</evidence>
<evidence type="ECO:0000312" key="13">
    <source>
        <dbReference type="HGNC" id="HGNC:28898"/>
    </source>
</evidence>
<evidence type="ECO:0007744" key="14">
    <source>
        <dbReference type="PDB" id="6UVA"/>
    </source>
</evidence>
<evidence type="ECO:0007829" key="15">
    <source>
        <dbReference type="PDB" id="6UVA"/>
    </source>
</evidence>
<comment type="function">
    <text evidence="6">Intermedin/ADM2 is a peptide hormone that plays a role as physiological regulator of gastrointestinal and cardiovascular bioactivities mediated by the CALCRL-RAMPs receptor complexes (PubMed:14615490). Activates the cAMP-dependent pathway through interaction with CALCRL-RAMP3 receptor complex (PubMed:14615490).</text>
</comment>
<comment type="subcellular location">
    <subcellularLocation>
        <location evidence="12">Secreted</location>
    </subcellularLocation>
</comment>
<comment type="tissue specificity">
    <text evidence="6 7">Expressed in the esophagus, stomach, jejunum, ileum, ileocecum, ascending colon, transverse colon, descending colon and rectum. Expressed in myocardial cells of the heart, renal tubular cells, hypothalamus, and pituitary.</text>
</comment>
<comment type="similarity">
    <text evidence="11">Belongs to the adrenomedullin family.</text>
</comment>
<keyword id="KW-0002">3D-structure</keyword>
<keyword id="KW-0027">Amidation</keyword>
<keyword id="KW-0165">Cleavage on pair of basic residues</keyword>
<keyword id="KW-1015">Disulfide bond</keyword>
<keyword id="KW-0372">Hormone</keyword>
<keyword id="KW-1185">Reference proteome</keyword>
<keyword id="KW-0964">Secreted</keyword>
<keyword id="KW-0732">Signal</keyword>
<dbReference type="EMBL" id="AF529213">
    <property type="protein sequence ID" value="AAQ09100.1"/>
    <property type="molecule type" value="mRNA"/>
</dbReference>
<dbReference type="EMBL" id="AB121034">
    <property type="protein sequence ID" value="BAD07411.1"/>
    <property type="molecule type" value="mRNA"/>
</dbReference>
<dbReference type="EMBL" id="AB236970">
    <property type="protein sequence ID" value="BAE46395.1"/>
    <property type="molecule type" value="mRNA"/>
</dbReference>
<dbReference type="EMBL" id="AL096767">
    <property type="status" value="NOT_ANNOTATED_CDS"/>
    <property type="molecule type" value="Genomic_DNA"/>
</dbReference>
<dbReference type="CCDS" id="CCDS33682.1"/>
<dbReference type="RefSeq" id="NP_001240774.1">
    <property type="nucleotide sequence ID" value="NM_001253845.2"/>
</dbReference>
<dbReference type="RefSeq" id="NP_001356811.1">
    <property type="nucleotide sequence ID" value="NM_001369882.1"/>
</dbReference>
<dbReference type="RefSeq" id="XP_016884429.1">
    <property type="nucleotide sequence ID" value="XM_017028940.1"/>
</dbReference>
<dbReference type="PDB" id="6D1U">
    <property type="method" value="X-ray"/>
    <property type="resolution" value="2.05 A"/>
    <property type="chains" value="D/E/F=129-147"/>
</dbReference>
<dbReference type="PDB" id="6UVA">
    <property type="method" value="EM"/>
    <property type="resolution" value="2.30 A"/>
    <property type="chains" value="P=101-147"/>
</dbReference>
<dbReference type="PDBsum" id="6D1U"/>
<dbReference type="PDBsum" id="6UVA"/>
<dbReference type="EMDB" id="EMD-20906"/>
<dbReference type="SMR" id="Q7Z4H4"/>
<dbReference type="BioGRID" id="123001">
    <property type="interactions" value="2"/>
</dbReference>
<dbReference type="FunCoup" id="Q7Z4H4">
    <property type="interactions" value="627"/>
</dbReference>
<dbReference type="STRING" id="9606.ENSP00000379087"/>
<dbReference type="BindingDB" id="Q7Z4H4"/>
<dbReference type="ChEMBL" id="CHEMBL5267"/>
<dbReference type="PhosphoSitePlus" id="Q7Z4H4"/>
<dbReference type="BioMuta" id="ADM2"/>
<dbReference type="DMDM" id="47115749"/>
<dbReference type="jPOST" id="Q7Z4H4"/>
<dbReference type="PaxDb" id="9606-ENSP00000379087"/>
<dbReference type="PeptideAtlas" id="Q7Z4H4"/>
<dbReference type="Antibodypedia" id="52597">
    <property type="antibodies" value="163 antibodies from 19 providers"/>
</dbReference>
<dbReference type="DNASU" id="79924"/>
<dbReference type="Ensembl" id="ENST00000395737.2">
    <property type="protein sequence ID" value="ENSP00000379086.1"/>
    <property type="gene ID" value="ENSG00000128165.9"/>
</dbReference>
<dbReference type="Ensembl" id="ENST00000395738.2">
    <property type="protein sequence ID" value="ENSP00000379087.2"/>
    <property type="gene ID" value="ENSG00000128165.9"/>
</dbReference>
<dbReference type="GeneID" id="79924"/>
<dbReference type="KEGG" id="hsa:79924"/>
<dbReference type="MANE-Select" id="ENST00000395737.2">
    <property type="protein sequence ID" value="ENSP00000379086.1"/>
    <property type="RefSeq nucleotide sequence ID" value="NM_001253845.2"/>
    <property type="RefSeq protein sequence ID" value="NP_001240774.1"/>
</dbReference>
<dbReference type="UCSC" id="uc003blj.4">
    <property type="organism name" value="human"/>
</dbReference>
<dbReference type="AGR" id="HGNC:28898"/>
<dbReference type="CTD" id="79924"/>
<dbReference type="DisGeNET" id="79924"/>
<dbReference type="GeneCards" id="ADM2"/>
<dbReference type="HGNC" id="HGNC:28898">
    <property type="gene designation" value="ADM2"/>
</dbReference>
<dbReference type="HPA" id="ENSG00000128165">
    <property type="expression patterns" value="Tissue enhanced (kidney, pancreas, thyroid gland)"/>
</dbReference>
<dbReference type="MIM" id="608682">
    <property type="type" value="gene"/>
</dbReference>
<dbReference type="neXtProt" id="NX_Q7Z4H4"/>
<dbReference type="OpenTargets" id="ENSG00000128165"/>
<dbReference type="PharmGKB" id="PA134898869"/>
<dbReference type="VEuPathDB" id="HostDB:ENSG00000128165"/>
<dbReference type="eggNOG" id="ENOG502S7F2">
    <property type="taxonomic scope" value="Eukaryota"/>
</dbReference>
<dbReference type="GeneTree" id="ENSGT00940000154380"/>
<dbReference type="HOGENOM" id="CLU_134508_0_0_1"/>
<dbReference type="InParanoid" id="Q7Z4H4"/>
<dbReference type="OMA" id="VTFGCIS"/>
<dbReference type="OrthoDB" id="9907777at2759"/>
<dbReference type="PAN-GO" id="Q7Z4H4">
    <property type="GO annotations" value="3 GO annotations based on evolutionary models"/>
</dbReference>
<dbReference type="PhylomeDB" id="Q7Z4H4"/>
<dbReference type="TreeFam" id="TF338591"/>
<dbReference type="PathwayCommons" id="Q7Z4H4"/>
<dbReference type="Reactome" id="R-HSA-418555">
    <property type="pathway name" value="G alpha (s) signalling events"/>
</dbReference>
<dbReference type="Reactome" id="R-HSA-419812">
    <property type="pathway name" value="Calcitonin-like ligand receptors"/>
</dbReference>
<dbReference type="BioGRID-ORCS" id="79924">
    <property type="hits" value="16 hits in 1152 CRISPR screens"/>
</dbReference>
<dbReference type="ChiTaRS" id="ADM2">
    <property type="organism name" value="human"/>
</dbReference>
<dbReference type="GeneWiki" id="ADM2"/>
<dbReference type="GenomeRNAi" id="79924"/>
<dbReference type="Pharos" id="Q7Z4H4">
    <property type="development level" value="Tchem"/>
</dbReference>
<dbReference type="PRO" id="PR:Q7Z4H4"/>
<dbReference type="Proteomes" id="UP000005640">
    <property type="component" value="Chromosome 22"/>
</dbReference>
<dbReference type="RNAct" id="Q7Z4H4">
    <property type="molecule type" value="protein"/>
</dbReference>
<dbReference type="Bgee" id="ENSG00000128165">
    <property type="expression patterns" value="Expressed in body of pancreas and 101 other cell types or tissues"/>
</dbReference>
<dbReference type="GO" id="GO:0005576">
    <property type="term" value="C:extracellular region"/>
    <property type="evidence" value="ECO:0000304"/>
    <property type="project" value="Reactome"/>
</dbReference>
<dbReference type="GO" id="GO:0005615">
    <property type="term" value="C:extracellular space"/>
    <property type="evidence" value="ECO:0000314"/>
    <property type="project" value="UniProt"/>
</dbReference>
<dbReference type="GO" id="GO:0005179">
    <property type="term" value="F:hormone activity"/>
    <property type="evidence" value="ECO:0000314"/>
    <property type="project" value="UniProt"/>
</dbReference>
<dbReference type="GO" id="GO:0044877">
    <property type="term" value="F:protein-containing complex binding"/>
    <property type="evidence" value="ECO:0000314"/>
    <property type="project" value="UniProtKB"/>
</dbReference>
<dbReference type="GO" id="GO:0007189">
    <property type="term" value="P:adenylate cyclase-activating G protein-coupled receptor signaling pathway"/>
    <property type="evidence" value="ECO:0000318"/>
    <property type="project" value="GO_Central"/>
</dbReference>
<dbReference type="GO" id="GO:1990410">
    <property type="term" value="P:adrenomedullin receptor signaling pathway"/>
    <property type="evidence" value="ECO:0000314"/>
    <property type="project" value="UniProt"/>
</dbReference>
<dbReference type="GO" id="GO:0001525">
    <property type="term" value="P:angiogenesis"/>
    <property type="evidence" value="ECO:0000314"/>
    <property type="project" value="UniProtKB"/>
</dbReference>
<dbReference type="GO" id="GO:0007631">
    <property type="term" value="P:feeding behavior"/>
    <property type="evidence" value="ECO:0007669"/>
    <property type="project" value="Ensembl"/>
</dbReference>
<dbReference type="GO" id="GO:0045776">
    <property type="term" value="P:negative regulation of blood pressure"/>
    <property type="evidence" value="ECO:0007669"/>
    <property type="project" value="Ensembl"/>
</dbReference>
<dbReference type="GO" id="GO:0045766">
    <property type="term" value="P:positive regulation of angiogenesis"/>
    <property type="evidence" value="ECO:0000314"/>
    <property type="project" value="MGI"/>
</dbReference>
<dbReference type="GO" id="GO:0010628">
    <property type="term" value="P:positive regulation of gene expression"/>
    <property type="evidence" value="ECO:0000314"/>
    <property type="project" value="UniProtKB"/>
</dbReference>
<dbReference type="GO" id="GO:0010460">
    <property type="term" value="P:positive regulation of heart rate"/>
    <property type="evidence" value="ECO:0000318"/>
    <property type="project" value="GO_Central"/>
</dbReference>
<dbReference type="GO" id="GO:0006468">
    <property type="term" value="P:protein phosphorylation"/>
    <property type="evidence" value="ECO:0000314"/>
    <property type="project" value="UniProtKB"/>
</dbReference>
<dbReference type="GO" id="GO:0003073">
    <property type="term" value="P:regulation of systemic arterial blood pressure"/>
    <property type="evidence" value="ECO:0000318"/>
    <property type="project" value="GO_Central"/>
</dbReference>
<dbReference type="InterPro" id="IPR051665">
    <property type="entry name" value="Adrenomedullin-reg_peptide"/>
</dbReference>
<dbReference type="PANTHER" id="PTHR23414">
    <property type="entry name" value="ADRENOMEDULLIN, ADM"/>
    <property type="match status" value="1"/>
</dbReference>
<dbReference type="PANTHER" id="PTHR23414:SF2">
    <property type="entry name" value="PROTEIN ADM2"/>
    <property type="match status" value="1"/>
</dbReference>
<feature type="signal peptide" evidence="3">
    <location>
        <begin position="1"/>
        <end position="24"/>
    </location>
</feature>
<feature type="propeptide" id="PRO_0000000977" evidence="1">
    <location>
        <begin position="25"/>
        <end position="98"/>
    </location>
</feature>
<feature type="peptide" id="PRO_0000000978" description="Adrenomedullin-2" evidence="1">
    <location>
        <begin position="101"/>
        <end position="147"/>
    </location>
</feature>
<feature type="peptide" id="PRO_0000000979" description="Intermedin-short" evidence="4">
    <location>
        <begin position="108"/>
        <end position="147"/>
    </location>
</feature>
<feature type="region of interest" description="Disordered" evidence="5">
    <location>
        <begin position="26"/>
        <end position="57"/>
    </location>
</feature>
<feature type="region of interest" description="Disordered" evidence="5">
    <location>
        <begin position="70"/>
        <end position="101"/>
    </location>
</feature>
<feature type="site" description="Required for CALCRL receptor interaction" evidence="8">
    <location>
        <position position="107"/>
    </location>
</feature>
<feature type="site" description="Required for CALCRL receptor interaction" evidence="8">
    <location>
        <position position="114"/>
    </location>
</feature>
<feature type="site" description="Required for CALCRL receptor interaction" evidence="8">
    <location>
        <position position="119"/>
    </location>
</feature>
<feature type="modified residue" description="Tyrosine amide" evidence="2">
    <location>
        <position position="147"/>
    </location>
</feature>
<feature type="disulfide bond" evidence="8">
    <location>
        <begin position="110"/>
        <end position="115"/>
    </location>
</feature>
<feature type="helix" evidence="15">
    <location>
        <begin position="116"/>
        <end position="127"/>
    </location>
</feature>
<feature type="strand" evidence="15">
    <location>
        <begin position="130"/>
        <end position="132"/>
    </location>
</feature>
<accession>Q7Z4H4</accession>
<accession>Q3LFQ0</accession>
<organism>
    <name type="scientific">Homo sapiens</name>
    <name type="common">Human</name>
    <dbReference type="NCBI Taxonomy" id="9606"/>
    <lineage>
        <taxon>Eukaryota</taxon>
        <taxon>Metazoa</taxon>
        <taxon>Chordata</taxon>
        <taxon>Craniata</taxon>
        <taxon>Vertebrata</taxon>
        <taxon>Euteleostomi</taxon>
        <taxon>Mammalia</taxon>
        <taxon>Eutheria</taxon>
        <taxon>Euarchontoglires</taxon>
        <taxon>Primates</taxon>
        <taxon>Haplorrhini</taxon>
        <taxon>Catarrhini</taxon>
        <taxon>Hominidae</taxon>
        <taxon>Homo</taxon>
    </lineage>
</organism>
<name>ADM2_HUMAN</name>
<gene>
    <name evidence="13" type="primary">ADM2</name>
    <name type="synonym">AM2</name>
</gene>
<sequence length="148" mass="15865">MARIPTAALGCISLLCLQLPGSLSRSLGGDPRPVKPREPPARSPSSSLQPRHPAPRPVVWKLHRALQAQRGAGLAPVMGQPLRDGGRQHSGPRRHSGPRRTQAQLLRVGCVLGTCQVQNLSHRLWQLMGPAGRQDSAPVDPSSPHSYG</sequence>
<protein>
    <recommendedName>
        <fullName>Protein ADM2</fullName>
    </recommendedName>
    <alternativeName>
        <fullName evidence="9">Intermedin</fullName>
    </alternativeName>
    <component>
        <recommendedName>
            <fullName evidence="10">Adrenomedullin-2</fullName>
            <shortName>AM2</shortName>
        </recommendedName>
        <alternativeName>
            <fullName>Intermedin-long</fullName>
            <shortName>IMDL</shortName>
        </alternativeName>
    </component>
    <component>
        <recommendedName>
            <fullName>Intermedin-short</fullName>
            <shortName>IMDS</shortName>
        </recommendedName>
    </component>
</protein>